<sequence length="229" mass="25531">MYDISGWKHVFKLDPNKELSEEHLEMICESGTDAVIVGGSDGVTIDNVLHMLVSIRRYAVPCVLEVSDVEAITPGFDFYYIPSVLNSRKVEWVTGVHHEALKEFGDIMDWDEIFMEGYCVLNPEAKVAQLTDAKCDVTEDDVIAYARLADKLLRLPIFYLEYSGTYGDVELVKNVKAQLKQAKLYYGGGISNAEQAKEMAQHADTVVVGNIIYDDIKAALKTVKAVKGE</sequence>
<name>PCRB_BACC1</name>
<keyword id="KW-0444">Lipid biosynthesis</keyword>
<keyword id="KW-0443">Lipid metabolism</keyword>
<keyword id="KW-0460">Magnesium</keyword>
<keyword id="KW-0479">Metal-binding</keyword>
<keyword id="KW-0594">Phospholipid biosynthesis</keyword>
<keyword id="KW-1208">Phospholipid metabolism</keyword>
<keyword id="KW-0808">Transferase</keyword>
<protein>
    <recommendedName>
        <fullName evidence="1">Heptaprenylglyceryl phosphate synthase</fullName>
        <shortName evidence="1">HepGP synthase</shortName>
        <ecNumber evidence="1">2.5.1.n9</ecNumber>
    </recommendedName>
    <alternativeName>
        <fullName evidence="1">Glycerol-1-phosphate heptaprenyltransferase</fullName>
    </alternativeName>
</protein>
<organism>
    <name type="scientific">Bacillus cereus (strain ATCC 10987 / NRS 248)</name>
    <dbReference type="NCBI Taxonomy" id="222523"/>
    <lineage>
        <taxon>Bacteria</taxon>
        <taxon>Bacillati</taxon>
        <taxon>Bacillota</taxon>
        <taxon>Bacilli</taxon>
        <taxon>Bacillales</taxon>
        <taxon>Bacillaceae</taxon>
        <taxon>Bacillus</taxon>
        <taxon>Bacillus cereus group</taxon>
    </lineage>
</organism>
<gene>
    <name evidence="1" type="primary">pcrB</name>
    <name type="ordered locus">BCE_0333</name>
</gene>
<accession>Q73EM5</accession>
<comment type="function">
    <text evidence="1">Prenyltransferase that catalyzes in vivo the transfer of the heptaprenyl moiety of heptaprenyl pyrophosphate (HepPP; 35 carbon atoms) to the C3 hydroxyl of sn-glycerol-1-phosphate (G1P), producing heptaprenylglyceryl phosphate (HepGP). This reaction is an ether-bond-formation step in the biosynthesis of archaea-type G1P-based membrane lipids found in Bacillales.</text>
</comment>
<comment type="catalytic activity">
    <reaction evidence="1">
        <text>sn-glycerol 1-phosphate + all-trans-heptaprenyl diphosphate = 3-heptaprenyl-sn-glycero-1-phosphate + diphosphate</text>
        <dbReference type="Rhea" id="RHEA:33495"/>
        <dbReference type="ChEBI" id="CHEBI:33019"/>
        <dbReference type="ChEBI" id="CHEBI:57685"/>
        <dbReference type="ChEBI" id="CHEBI:58206"/>
        <dbReference type="ChEBI" id="CHEBI:64781"/>
        <dbReference type="EC" id="2.5.1.n9"/>
    </reaction>
</comment>
<comment type="cofactor">
    <cofactor evidence="1">
        <name>Mg(2+)</name>
        <dbReference type="ChEBI" id="CHEBI:18420"/>
    </cofactor>
</comment>
<comment type="pathway">
    <text evidence="1">Membrane lipid metabolism; glycerophospholipid metabolism.</text>
</comment>
<comment type="subunit">
    <text evidence="1">Homodimer.</text>
</comment>
<comment type="similarity">
    <text evidence="1">Belongs to the GGGP/HepGP synthase family. Group I subfamily.</text>
</comment>
<comment type="sequence caution" evidence="2">
    <conflict type="erroneous initiation">
        <sequence resource="EMBL-CDS" id="AAS39269"/>
    </conflict>
</comment>
<evidence type="ECO:0000255" key="1">
    <source>
        <dbReference type="HAMAP-Rule" id="MF_00112"/>
    </source>
</evidence>
<evidence type="ECO:0000305" key="2"/>
<dbReference type="EC" id="2.5.1.n9" evidence="1"/>
<dbReference type="EMBL" id="AE017194">
    <property type="protein sequence ID" value="AAS39269.1"/>
    <property type="status" value="ALT_INIT"/>
    <property type="molecule type" value="Genomic_DNA"/>
</dbReference>
<dbReference type="SMR" id="Q73EM5"/>
<dbReference type="KEGG" id="bca:BCE_0333"/>
<dbReference type="HOGENOM" id="CLU_095211_0_0_9"/>
<dbReference type="UniPathway" id="UPA00940"/>
<dbReference type="Proteomes" id="UP000002527">
    <property type="component" value="Chromosome"/>
</dbReference>
<dbReference type="GO" id="GO:0120536">
    <property type="term" value="F:heptaprenylglyceryl phosphate synthase activity"/>
    <property type="evidence" value="ECO:0007669"/>
    <property type="project" value="RHEA"/>
</dbReference>
<dbReference type="GO" id="GO:0000287">
    <property type="term" value="F:magnesium ion binding"/>
    <property type="evidence" value="ECO:0007669"/>
    <property type="project" value="UniProtKB-UniRule"/>
</dbReference>
<dbReference type="GO" id="GO:0046474">
    <property type="term" value="P:glycerophospholipid biosynthetic process"/>
    <property type="evidence" value="ECO:0007669"/>
    <property type="project" value="UniProtKB-UniRule"/>
</dbReference>
<dbReference type="CDD" id="cd02812">
    <property type="entry name" value="PcrB_like"/>
    <property type="match status" value="1"/>
</dbReference>
<dbReference type="FunFam" id="3.20.20.390:FF:000001">
    <property type="entry name" value="Heptaprenylglyceryl phosphate synthase"/>
    <property type="match status" value="1"/>
</dbReference>
<dbReference type="Gene3D" id="3.20.20.390">
    <property type="entry name" value="FMN-linked oxidoreductases"/>
    <property type="match status" value="1"/>
</dbReference>
<dbReference type="HAMAP" id="MF_00112">
    <property type="entry name" value="GGGP_HepGP_synthase"/>
    <property type="match status" value="1"/>
</dbReference>
<dbReference type="InterPro" id="IPR039074">
    <property type="entry name" value="GGGP/HepGP_synthase_I"/>
</dbReference>
<dbReference type="InterPro" id="IPR038597">
    <property type="entry name" value="GGGP/HepGP_synthase_sf"/>
</dbReference>
<dbReference type="InterPro" id="IPR008205">
    <property type="entry name" value="GGGP_HepGP_synthase"/>
</dbReference>
<dbReference type="NCBIfam" id="TIGR01768">
    <property type="entry name" value="GGGP-family"/>
    <property type="match status" value="1"/>
</dbReference>
<dbReference type="NCBIfam" id="NF003197">
    <property type="entry name" value="PRK04169.1-1"/>
    <property type="match status" value="1"/>
</dbReference>
<dbReference type="NCBIfam" id="NF003199">
    <property type="entry name" value="PRK04169.1-3"/>
    <property type="match status" value="1"/>
</dbReference>
<dbReference type="PANTHER" id="PTHR40029">
    <property type="match status" value="1"/>
</dbReference>
<dbReference type="PANTHER" id="PTHR40029:SF2">
    <property type="entry name" value="HEPTAPRENYLGLYCERYL PHOSPHATE SYNTHASE"/>
    <property type="match status" value="1"/>
</dbReference>
<dbReference type="Pfam" id="PF01884">
    <property type="entry name" value="PcrB"/>
    <property type="match status" value="1"/>
</dbReference>
<dbReference type="SUPFAM" id="SSF51395">
    <property type="entry name" value="FMN-linked oxidoreductases"/>
    <property type="match status" value="1"/>
</dbReference>
<feature type="chain" id="PRO_0000138704" description="Heptaprenylglyceryl phosphate synthase">
    <location>
        <begin position="1"/>
        <end position="229"/>
    </location>
</feature>
<feature type="binding site" evidence="1">
    <location>
        <position position="12"/>
    </location>
    <ligand>
        <name>sn-glycerol 1-phosphate</name>
        <dbReference type="ChEBI" id="CHEBI:57685"/>
    </ligand>
</feature>
<feature type="binding site" evidence="1">
    <location>
        <position position="14"/>
    </location>
    <ligand>
        <name>Mg(2+)</name>
        <dbReference type="ChEBI" id="CHEBI:18420"/>
    </ligand>
</feature>
<feature type="binding site" evidence="1">
    <location>
        <position position="40"/>
    </location>
    <ligand>
        <name>Mg(2+)</name>
        <dbReference type="ChEBI" id="CHEBI:18420"/>
    </ligand>
</feature>
<feature type="binding site" evidence="1">
    <location>
        <begin position="159"/>
        <end position="164"/>
    </location>
    <ligand>
        <name>sn-glycerol 1-phosphate</name>
        <dbReference type="ChEBI" id="CHEBI:57685"/>
    </ligand>
</feature>
<feature type="binding site" evidence="1">
    <location>
        <position position="189"/>
    </location>
    <ligand>
        <name>sn-glycerol 1-phosphate</name>
        <dbReference type="ChEBI" id="CHEBI:57685"/>
    </ligand>
</feature>
<feature type="binding site" evidence="1">
    <location>
        <begin position="209"/>
        <end position="210"/>
    </location>
    <ligand>
        <name>sn-glycerol 1-phosphate</name>
        <dbReference type="ChEBI" id="CHEBI:57685"/>
    </ligand>
</feature>
<reference key="1">
    <citation type="journal article" date="2004" name="Nucleic Acids Res.">
        <title>The genome sequence of Bacillus cereus ATCC 10987 reveals metabolic adaptations and a large plasmid related to Bacillus anthracis pXO1.</title>
        <authorList>
            <person name="Rasko D.A."/>
            <person name="Ravel J."/>
            <person name="Oekstad O.A."/>
            <person name="Helgason E."/>
            <person name="Cer R.Z."/>
            <person name="Jiang L."/>
            <person name="Shores K.A."/>
            <person name="Fouts D.E."/>
            <person name="Tourasse N.J."/>
            <person name="Angiuoli S.V."/>
            <person name="Kolonay J.F."/>
            <person name="Nelson W.C."/>
            <person name="Kolstoe A.-B."/>
            <person name="Fraser C.M."/>
            <person name="Read T.D."/>
        </authorList>
    </citation>
    <scope>NUCLEOTIDE SEQUENCE [LARGE SCALE GENOMIC DNA]</scope>
    <source>
        <strain>ATCC 10987 / NRS 248</strain>
    </source>
</reference>
<proteinExistence type="inferred from homology"/>